<name>1433B_VICFA</name>
<dbReference type="EMBL" id="Z48505">
    <property type="protein sequence ID" value="CAA88416.1"/>
    <property type="molecule type" value="mRNA"/>
</dbReference>
<dbReference type="PIR" id="S52900">
    <property type="entry name" value="S52900"/>
</dbReference>
<dbReference type="SMR" id="P42654"/>
<dbReference type="EnsemblPlants" id="Vfaba.Hedin2.R1.1g044640.1">
    <property type="protein sequence ID" value="cds:Vfaba.Hedin2.R1.1g044640.1"/>
    <property type="gene ID" value="Vfaba.Hedin2.R1.1g044640"/>
</dbReference>
<dbReference type="Gramene" id="Vfaba.Hedin2.R1.1g044640.1">
    <property type="protein sequence ID" value="cds:Vfaba.Hedin2.R1.1g044640.1"/>
    <property type="gene ID" value="Vfaba.Hedin2.R1.1g044640"/>
</dbReference>
<dbReference type="OrthoDB" id="10260625at2759"/>
<dbReference type="GO" id="GO:0005509">
    <property type="term" value="F:calcium ion binding"/>
    <property type="evidence" value="ECO:0007669"/>
    <property type="project" value="EnsemblPlants"/>
</dbReference>
<dbReference type="GO" id="GO:0048528">
    <property type="term" value="P:post-embryonic root development"/>
    <property type="evidence" value="ECO:0007669"/>
    <property type="project" value="EnsemblPlants"/>
</dbReference>
<dbReference type="FunFam" id="1.20.190.20:FF:000002">
    <property type="entry name" value="14-3-3 protein epsilon"/>
    <property type="match status" value="1"/>
</dbReference>
<dbReference type="Gene3D" id="1.20.190.20">
    <property type="entry name" value="14-3-3 domain"/>
    <property type="match status" value="1"/>
</dbReference>
<dbReference type="InterPro" id="IPR000308">
    <property type="entry name" value="14-3-3"/>
</dbReference>
<dbReference type="InterPro" id="IPR023409">
    <property type="entry name" value="14-3-3_CS"/>
</dbReference>
<dbReference type="InterPro" id="IPR036815">
    <property type="entry name" value="14-3-3_dom_sf"/>
</dbReference>
<dbReference type="InterPro" id="IPR023410">
    <property type="entry name" value="14-3-3_domain"/>
</dbReference>
<dbReference type="PANTHER" id="PTHR18860">
    <property type="entry name" value="14-3-3 PROTEIN"/>
    <property type="match status" value="1"/>
</dbReference>
<dbReference type="Pfam" id="PF00244">
    <property type="entry name" value="14-3-3"/>
    <property type="match status" value="1"/>
</dbReference>
<dbReference type="PIRSF" id="PIRSF000868">
    <property type="entry name" value="14-3-3"/>
    <property type="match status" value="1"/>
</dbReference>
<dbReference type="PRINTS" id="PR00305">
    <property type="entry name" value="1433ZETA"/>
</dbReference>
<dbReference type="SMART" id="SM00101">
    <property type="entry name" value="14_3_3"/>
    <property type="match status" value="1"/>
</dbReference>
<dbReference type="SUPFAM" id="SSF48445">
    <property type="entry name" value="14-3-3 protein"/>
    <property type="match status" value="1"/>
</dbReference>
<dbReference type="PROSITE" id="PS00796">
    <property type="entry name" value="1433_1"/>
    <property type="match status" value="1"/>
</dbReference>
<dbReference type="PROSITE" id="PS00797">
    <property type="entry name" value="1433_2"/>
    <property type="match status" value="1"/>
</dbReference>
<evidence type="ECO:0000256" key="1">
    <source>
        <dbReference type="SAM" id="MobiDB-lite"/>
    </source>
</evidence>
<evidence type="ECO:0000305" key="2"/>
<proteinExistence type="evidence at transcript level"/>
<feature type="chain" id="PRO_0000058714" description="14-3-3-like protein B">
    <location>
        <begin position="1"/>
        <end position="261"/>
    </location>
</feature>
<feature type="region of interest" description="Disordered" evidence="1">
    <location>
        <begin position="237"/>
        <end position="261"/>
    </location>
</feature>
<organism>
    <name type="scientific">Vicia faba</name>
    <name type="common">Broad bean</name>
    <name type="synonym">Faba vulgaris</name>
    <dbReference type="NCBI Taxonomy" id="3906"/>
    <lineage>
        <taxon>Eukaryota</taxon>
        <taxon>Viridiplantae</taxon>
        <taxon>Streptophyta</taxon>
        <taxon>Embryophyta</taxon>
        <taxon>Tracheophyta</taxon>
        <taxon>Spermatophyta</taxon>
        <taxon>Magnoliopsida</taxon>
        <taxon>eudicotyledons</taxon>
        <taxon>Gunneridae</taxon>
        <taxon>Pentapetalae</taxon>
        <taxon>rosids</taxon>
        <taxon>fabids</taxon>
        <taxon>Fabales</taxon>
        <taxon>Fabaceae</taxon>
        <taxon>Papilionoideae</taxon>
        <taxon>50 kb inversion clade</taxon>
        <taxon>NPAAA clade</taxon>
        <taxon>Hologalegina</taxon>
        <taxon>IRL clade</taxon>
        <taxon>Fabeae</taxon>
        <taxon>Vicia</taxon>
    </lineage>
</organism>
<reference key="1">
    <citation type="submission" date="1995-02" db="EMBL/GenBank/DDBJ databases">
        <authorList>
            <person name="Saalbach G."/>
            <person name="Christov V."/>
            <person name="Schwerdel M."/>
        </authorList>
    </citation>
    <scope>NUCLEOTIDE SEQUENCE [MRNA]</scope>
    <source>
        <tissue>Cotyledon</tissue>
    </source>
</reference>
<protein>
    <recommendedName>
        <fullName>14-3-3-like protein B</fullName>
    </recommendedName>
    <alternativeName>
        <fullName>VFA-1433B</fullName>
    </alternativeName>
</protein>
<comment type="similarity">
    <text evidence="2">Belongs to the 14-3-3 family.</text>
</comment>
<accession>P42654</accession>
<sequence>MASTKDRENFVYIAKLAEQAERYEEMVDSMKNVANLDVELTIEERNLLSVGYKNVIGARRASWRILSSIEQKEESKGNDVNAKRIKEYRHKVETELSNICIDVMRVIDEHLIPSAAAGESTVFYYKMKGDYYRYLAEFKTGNEKKEAGDQSMKAYESATTAAEAELPPTHPIRLGLALNFSVFYYEILNSPERACHLAKQAFDEAISELDTLNEESYKDSTLIMQLLRDNLTLWTSDIPEDGEDSQKANGTAKFGGGDDAE</sequence>